<comment type="catalytic activity">
    <reaction>
        <text>(S)-4-amino-5-oxopentanoate = 5-aminolevulinate</text>
        <dbReference type="Rhea" id="RHEA:14265"/>
        <dbReference type="ChEBI" id="CHEBI:57501"/>
        <dbReference type="ChEBI" id="CHEBI:356416"/>
        <dbReference type="EC" id="5.4.3.8"/>
    </reaction>
</comment>
<comment type="cofactor">
    <cofactor evidence="1">
        <name>pyridoxal 5'-phosphate</name>
        <dbReference type="ChEBI" id="CHEBI:597326"/>
    </cofactor>
</comment>
<comment type="pathway">
    <text>Porphyrin-containing compound metabolism; protoporphyrin-IX biosynthesis; 5-aminolevulinate from L-glutamyl-tRNA(Glu): step 2/2.</text>
</comment>
<comment type="subcellular location">
    <subcellularLocation>
        <location evidence="2">Cytoplasm</location>
    </subcellularLocation>
</comment>
<comment type="similarity">
    <text evidence="2">Belongs to the class-III pyridoxal-phosphate-dependent aminotransferase family. HemL subfamily.</text>
</comment>
<accession>Q9Y9I9</accession>
<feature type="chain" id="PRO_0000120476" description="Glutamate-1-semialdehyde 2,1-aminomutase">
    <location>
        <begin position="1"/>
        <end position="429"/>
    </location>
</feature>
<feature type="modified residue" description="N6-(pyridoxal phosphate)lysine" evidence="1">
    <location>
        <position position="266"/>
    </location>
</feature>
<feature type="helix" evidence="3">
    <location>
        <begin position="5"/>
        <end position="14"/>
    </location>
</feature>
<feature type="turn" evidence="3">
    <location>
        <begin position="15"/>
        <end position="17"/>
    </location>
</feature>
<feature type="helix" evidence="3">
    <location>
        <begin position="19"/>
        <end position="21"/>
    </location>
</feature>
<feature type="strand" evidence="3">
    <location>
        <begin position="22"/>
        <end position="24"/>
    </location>
</feature>
<feature type="helix" evidence="3">
    <location>
        <begin position="25"/>
        <end position="29"/>
    </location>
</feature>
<feature type="strand" evidence="3">
    <location>
        <begin position="31"/>
        <end position="33"/>
    </location>
</feature>
<feature type="strand" evidence="3">
    <location>
        <begin position="37"/>
        <end position="42"/>
    </location>
</feature>
<feature type="strand" evidence="3">
    <location>
        <begin position="44"/>
        <end position="47"/>
    </location>
</feature>
<feature type="strand" evidence="3">
    <location>
        <begin position="52"/>
        <end position="57"/>
    </location>
</feature>
<feature type="helix" evidence="3">
    <location>
        <begin position="58"/>
        <end position="60"/>
    </location>
</feature>
<feature type="helix" evidence="3">
    <location>
        <begin position="70"/>
        <end position="81"/>
    </location>
</feature>
<feature type="helix" evidence="3">
    <location>
        <begin position="91"/>
        <end position="104"/>
    </location>
</feature>
<feature type="strand" evidence="3">
    <location>
        <begin position="109"/>
        <end position="115"/>
    </location>
</feature>
<feature type="helix" evidence="3">
    <location>
        <begin position="116"/>
        <end position="131"/>
    </location>
</feature>
<feature type="strand" evidence="3">
    <location>
        <begin position="135"/>
        <end position="140"/>
    </location>
</feature>
<feature type="helix" evidence="3">
    <location>
        <begin position="148"/>
        <end position="150"/>
    </location>
</feature>
<feature type="strand" evidence="3">
    <location>
        <begin position="151"/>
        <end position="153"/>
    </location>
</feature>
<feature type="strand" evidence="3">
    <location>
        <begin position="163"/>
        <end position="166"/>
    </location>
</feature>
<feature type="helix" evidence="3">
    <location>
        <begin position="171"/>
        <end position="174"/>
    </location>
</feature>
<feature type="strand" evidence="3">
    <location>
        <begin position="177"/>
        <end position="181"/>
    </location>
</feature>
<feature type="helix" evidence="3">
    <location>
        <begin position="185"/>
        <end position="195"/>
    </location>
</feature>
<feature type="helix" evidence="3">
    <location>
        <begin position="196"/>
        <end position="198"/>
    </location>
</feature>
<feature type="strand" evidence="3">
    <location>
        <begin position="199"/>
        <end position="204"/>
    </location>
</feature>
<feature type="strand" evidence="3">
    <location>
        <begin position="206"/>
        <end position="208"/>
    </location>
</feature>
<feature type="strand" evidence="3">
    <location>
        <begin position="210"/>
        <end position="212"/>
    </location>
</feature>
<feature type="helix" evidence="3">
    <location>
        <begin position="218"/>
        <end position="231"/>
    </location>
</feature>
<feature type="strand" evidence="3">
    <location>
        <begin position="234"/>
        <end position="239"/>
    </location>
</feature>
<feature type="turn" evidence="3">
    <location>
        <begin position="240"/>
        <end position="245"/>
    </location>
</feature>
<feature type="helix" evidence="3">
    <location>
        <begin position="250"/>
        <end position="255"/>
    </location>
</feature>
<feature type="strand" evidence="3">
    <location>
        <begin position="260"/>
        <end position="265"/>
    </location>
</feature>
<feature type="helix" evidence="3">
    <location>
        <begin position="266"/>
        <end position="269"/>
    </location>
</feature>
<feature type="strand" evidence="3">
    <location>
        <begin position="275"/>
        <end position="279"/>
    </location>
</feature>
<feature type="helix" evidence="3">
    <location>
        <begin position="281"/>
        <end position="284"/>
    </location>
</feature>
<feature type="turn" evidence="3">
    <location>
        <begin position="288"/>
        <end position="290"/>
    </location>
</feature>
<feature type="strand" evidence="3">
    <location>
        <begin position="291"/>
        <end position="293"/>
    </location>
</feature>
<feature type="turn" evidence="3">
    <location>
        <begin position="298"/>
        <end position="301"/>
    </location>
</feature>
<feature type="helix" evidence="3">
    <location>
        <begin position="303"/>
        <end position="318"/>
    </location>
</feature>
<feature type="helix" evidence="3">
    <location>
        <begin position="321"/>
        <end position="343"/>
    </location>
</feature>
<feature type="strand" evidence="3">
    <location>
        <begin position="347"/>
        <end position="352"/>
    </location>
</feature>
<feature type="strand" evidence="3">
    <location>
        <begin position="355"/>
        <end position="360"/>
    </location>
</feature>
<feature type="helix" evidence="3">
    <location>
        <begin position="368"/>
        <end position="371"/>
    </location>
</feature>
<feature type="helix" evidence="3">
    <location>
        <begin position="376"/>
        <end position="388"/>
    </location>
</feature>
<feature type="helix" evidence="3">
    <location>
        <begin position="409"/>
        <end position="427"/>
    </location>
</feature>
<sequence length="429" mass="45954">MASGEKSRMLFERTKELFPGGVNSPVRAAVKPYPFYVKRGEGAYLYTVDGARIVDLVLAYGPLILGHKHPRVLEAVEEALARGWLYGAPGEAEVLLAEKILGYVKRGGMIRFVNSGTEATMTAIRLARGYTGRDLILKFDGCYHGSHDAVLVAAGSAAAHYGVPTSAGVPEAVARLTLVTPYNDVEALERVFAEYGDRIAGVIVEPVIANAGVIPPRREFLAALQRLSRESGALLILDEVVTGFRLGLEGAQGYFNIEGDIIVLGKIIGGGFPVGAVAGSREVMSLLTPQGKVFNAGTFNAHPITMAAGLATLKALEEEPVYSVSREAAKALEEAASEVLDRTGLPYTINRVESMMQLFIGVEEVSNAAQARKADKKFYVKLHEEMLRRGVFIAPSNLEAVFTGLPHQGEALEIAVEGLRSSLKTVLGS</sequence>
<organism>
    <name type="scientific">Aeropyrum pernix (strain ATCC 700893 / DSM 11879 / JCM 9820 / NBRC 100138 / K1)</name>
    <dbReference type="NCBI Taxonomy" id="272557"/>
    <lineage>
        <taxon>Archaea</taxon>
        <taxon>Thermoproteota</taxon>
        <taxon>Thermoprotei</taxon>
        <taxon>Desulfurococcales</taxon>
        <taxon>Desulfurococcaceae</taxon>
        <taxon>Aeropyrum</taxon>
    </lineage>
</organism>
<proteinExistence type="evidence at protein level"/>
<evidence type="ECO:0000250" key="1"/>
<evidence type="ECO:0000305" key="2"/>
<evidence type="ECO:0007829" key="3">
    <source>
        <dbReference type="PDB" id="2EPJ"/>
    </source>
</evidence>
<gene>
    <name type="primary">hemL</name>
    <name type="ordered locus">APE_2299.1</name>
</gene>
<reference key="1">
    <citation type="journal article" date="1999" name="DNA Res.">
        <title>Complete genome sequence of an aerobic hyper-thermophilic crenarchaeon, Aeropyrum pernix K1.</title>
        <authorList>
            <person name="Kawarabayasi Y."/>
            <person name="Hino Y."/>
            <person name="Horikawa H."/>
            <person name="Yamazaki S."/>
            <person name="Haikawa Y."/>
            <person name="Jin-no K."/>
            <person name="Takahashi M."/>
            <person name="Sekine M."/>
            <person name="Baba S."/>
            <person name="Ankai A."/>
            <person name="Kosugi H."/>
            <person name="Hosoyama A."/>
            <person name="Fukui S."/>
            <person name="Nagai Y."/>
            <person name="Nishijima K."/>
            <person name="Nakazawa H."/>
            <person name="Takamiya M."/>
            <person name="Masuda S."/>
            <person name="Funahashi T."/>
            <person name="Tanaka T."/>
            <person name="Kudoh Y."/>
            <person name="Yamazaki J."/>
            <person name="Kushida N."/>
            <person name="Oguchi A."/>
            <person name="Aoki K."/>
            <person name="Kubota K."/>
            <person name="Nakamura Y."/>
            <person name="Nomura N."/>
            <person name="Sako Y."/>
            <person name="Kikuchi H."/>
        </authorList>
    </citation>
    <scope>NUCLEOTIDE SEQUENCE [LARGE SCALE GENOMIC DNA]</scope>
    <source>
        <strain>ATCC 700893 / DSM 11879 / JCM 9820 / NBRC 100138 / K1</strain>
    </source>
</reference>
<dbReference type="EC" id="5.4.3.8"/>
<dbReference type="EMBL" id="BA000002">
    <property type="protein sequence ID" value="BAA81311.2"/>
    <property type="molecule type" value="Genomic_DNA"/>
</dbReference>
<dbReference type="PIR" id="G72456">
    <property type="entry name" value="G72456"/>
</dbReference>
<dbReference type="RefSeq" id="WP_010866923.1">
    <property type="nucleotide sequence ID" value="NC_000854.2"/>
</dbReference>
<dbReference type="PDB" id="2EPJ">
    <property type="method" value="X-ray"/>
    <property type="resolution" value="1.70 A"/>
    <property type="chains" value="A=2-429"/>
</dbReference>
<dbReference type="PDB" id="2ZSL">
    <property type="method" value="X-ray"/>
    <property type="resolution" value="1.70 A"/>
    <property type="chains" value="A=2-429"/>
</dbReference>
<dbReference type="PDB" id="2ZSM">
    <property type="method" value="X-ray"/>
    <property type="resolution" value="2.30 A"/>
    <property type="chains" value="A/B/C=2-429"/>
</dbReference>
<dbReference type="PDBsum" id="2EPJ"/>
<dbReference type="PDBsum" id="2ZSL"/>
<dbReference type="PDBsum" id="2ZSM"/>
<dbReference type="SMR" id="Q9Y9I9"/>
<dbReference type="STRING" id="272557.APE_2299.1"/>
<dbReference type="EnsemblBacteria" id="BAA81311">
    <property type="protein sequence ID" value="BAA81311"/>
    <property type="gene ID" value="APE_2299.1"/>
</dbReference>
<dbReference type="GeneID" id="1445331"/>
<dbReference type="KEGG" id="ape:APE_2299.1"/>
<dbReference type="PATRIC" id="fig|272557.25.peg.1533"/>
<dbReference type="eggNOG" id="arCOG00918">
    <property type="taxonomic scope" value="Archaea"/>
</dbReference>
<dbReference type="UniPathway" id="UPA00251">
    <property type="reaction ID" value="UER00317"/>
</dbReference>
<dbReference type="EvolutionaryTrace" id="Q9Y9I9"/>
<dbReference type="Proteomes" id="UP000002518">
    <property type="component" value="Chromosome"/>
</dbReference>
<dbReference type="GO" id="GO:0005737">
    <property type="term" value="C:cytoplasm"/>
    <property type="evidence" value="ECO:0007669"/>
    <property type="project" value="UniProtKB-SubCell"/>
</dbReference>
<dbReference type="GO" id="GO:0042286">
    <property type="term" value="F:glutamate-1-semialdehyde 2,1-aminomutase activity"/>
    <property type="evidence" value="ECO:0007669"/>
    <property type="project" value="UniProtKB-UniRule"/>
</dbReference>
<dbReference type="GO" id="GO:0030170">
    <property type="term" value="F:pyridoxal phosphate binding"/>
    <property type="evidence" value="ECO:0007669"/>
    <property type="project" value="InterPro"/>
</dbReference>
<dbReference type="GO" id="GO:0008483">
    <property type="term" value="F:transaminase activity"/>
    <property type="evidence" value="ECO:0007669"/>
    <property type="project" value="InterPro"/>
</dbReference>
<dbReference type="GO" id="GO:0006782">
    <property type="term" value="P:protoporphyrinogen IX biosynthetic process"/>
    <property type="evidence" value="ECO:0007669"/>
    <property type="project" value="UniProtKB-UniRule"/>
</dbReference>
<dbReference type="CDD" id="cd00610">
    <property type="entry name" value="OAT_like"/>
    <property type="match status" value="1"/>
</dbReference>
<dbReference type="FunFam" id="3.40.640.10:FF:000021">
    <property type="entry name" value="Glutamate-1-semialdehyde 2,1-aminomutase"/>
    <property type="match status" value="1"/>
</dbReference>
<dbReference type="Gene3D" id="3.90.1150.10">
    <property type="entry name" value="Aspartate Aminotransferase, domain 1"/>
    <property type="match status" value="1"/>
</dbReference>
<dbReference type="Gene3D" id="3.40.640.10">
    <property type="entry name" value="Type I PLP-dependent aspartate aminotransferase-like (Major domain)"/>
    <property type="match status" value="1"/>
</dbReference>
<dbReference type="HAMAP" id="MF_00375">
    <property type="entry name" value="HemL_aminotrans_3"/>
    <property type="match status" value="1"/>
</dbReference>
<dbReference type="InterPro" id="IPR004639">
    <property type="entry name" value="4pyrrol_synth_GluAld_NH2Trfase"/>
</dbReference>
<dbReference type="InterPro" id="IPR005814">
    <property type="entry name" value="Aminotrans_3"/>
</dbReference>
<dbReference type="InterPro" id="IPR049704">
    <property type="entry name" value="Aminotrans_3_PPA_site"/>
</dbReference>
<dbReference type="InterPro" id="IPR015424">
    <property type="entry name" value="PyrdxlP-dep_Trfase"/>
</dbReference>
<dbReference type="InterPro" id="IPR015421">
    <property type="entry name" value="PyrdxlP-dep_Trfase_major"/>
</dbReference>
<dbReference type="InterPro" id="IPR015422">
    <property type="entry name" value="PyrdxlP-dep_Trfase_small"/>
</dbReference>
<dbReference type="NCBIfam" id="TIGR00713">
    <property type="entry name" value="hemL"/>
    <property type="match status" value="1"/>
</dbReference>
<dbReference type="NCBIfam" id="NF000818">
    <property type="entry name" value="PRK00062.1"/>
    <property type="match status" value="1"/>
</dbReference>
<dbReference type="PANTHER" id="PTHR43713">
    <property type="entry name" value="GLUTAMATE-1-SEMIALDEHYDE 2,1-AMINOMUTASE"/>
    <property type="match status" value="1"/>
</dbReference>
<dbReference type="PANTHER" id="PTHR43713:SF3">
    <property type="entry name" value="GLUTAMATE-1-SEMIALDEHYDE 2,1-AMINOMUTASE 1, CHLOROPLASTIC-RELATED"/>
    <property type="match status" value="1"/>
</dbReference>
<dbReference type="Pfam" id="PF00202">
    <property type="entry name" value="Aminotran_3"/>
    <property type="match status" value="1"/>
</dbReference>
<dbReference type="SUPFAM" id="SSF53383">
    <property type="entry name" value="PLP-dependent transferases"/>
    <property type="match status" value="1"/>
</dbReference>
<dbReference type="PROSITE" id="PS00600">
    <property type="entry name" value="AA_TRANSFER_CLASS_3"/>
    <property type="match status" value="1"/>
</dbReference>
<name>GSA_AERPE</name>
<keyword id="KW-0002">3D-structure</keyword>
<keyword id="KW-0963">Cytoplasm</keyword>
<keyword id="KW-0413">Isomerase</keyword>
<keyword id="KW-0627">Porphyrin biosynthesis</keyword>
<keyword id="KW-0663">Pyridoxal phosphate</keyword>
<keyword id="KW-1185">Reference proteome</keyword>
<protein>
    <recommendedName>
        <fullName>Glutamate-1-semialdehyde 2,1-aminomutase</fullName>
        <shortName>GSA</shortName>
        <ecNumber>5.4.3.8</ecNumber>
    </recommendedName>
    <alternativeName>
        <fullName>Glutamate-1-semialdehyde aminotransferase</fullName>
        <shortName>GSA-AT</shortName>
    </alternativeName>
</protein>